<proteinExistence type="evidence at transcript level"/>
<sequence length="76" mass="8443">MKLLLLLLTVTLLLAQVTPVTKCWGKSGRCRTTCKKSEVYYILCKTEAKCCVDPKYVPVRSKLTDTNTSLESTSAV</sequence>
<accession>Q5J600</accession>
<organism>
    <name type="scientific">Macaca mulatta</name>
    <name type="common">Rhesus macaque</name>
    <dbReference type="NCBI Taxonomy" id="9544"/>
    <lineage>
        <taxon>Eukaryota</taxon>
        <taxon>Metazoa</taxon>
        <taxon>Chordata</taxon>
        <taxon>Craniata</taxon>
        <taxon>Vertebrata</taxon>
        <taxon>Euteleostomi</taxon>
        <taxon>Mammalia</taxon>
        <taxon>Eutheria</taxon>
        <taxon>Euarchontoglires</taxon>
        <taxon>Primates</taxon>
        <taxon>Haplorrhini</taxon>
        <taxon>Catarrhini</taxon>
        <taxon>Cercopithecidae</taxon>
        <taxon>Cercopithecinae</taxon>
        <taxon>Macaca</taxon>
    </lineage>
</organism>
<dbReference type="EMBL" id="AY499408">
    <property type="protein sequence ID" value="AAS89327.1"/>
    <property type="molecule type" value="mRNA"/>
</dbReference>
<dbReference type="RefSeq" id="NP_001029369.1">
    <property type="nucleotide sequence ID" value="NM_001034197.1"/>
</dbReference>
<dbReference type="SMR" id="Q5J600"/>
<dbReference type="FunCoup" id="Q5J600">
    <property type="interactions" value="13"/>
</dbReference>
<dbReference type="STRING" id="9544.ENSMMUP00000037672"/>
<dbReference type="PaxDb" id="9544-ENSMMUP00000023074"/>
<dbReference type="GeneID" id="619507"/>
<dbReference type="KEGG" id="mcc:619507"/>
<dbReference type="CTD" id="245934"/>
<dbReference type="eggNOG" id="ENOG502TDXP">
    <property type="taxonomic scope" value="Eukaryota"/>
</dbReference>
<dbReference type="HOGENOM" id="CLU_181906_2_1_1"/>
<dbReference type="InParanoid" id="Q5J600"/>
<dbReference type="OrthoDB" id="9534975at2759"/>
<dbReference type="Proteomes" id="UP000006718">
    <property type="component" value="Unassembled WGS sequence"/>
</dbReference>
<dbReference type="GO" id="GO:0005576">
    <property type="term" value="C:extracellular region"/>
    <property type="evidence" value="ECO:0007669"/>
    <property type="project" value="UniProtKB-SubCell"/>
</dbReference>
<dbReference type="GO" id="GO:0042742">
    <property type="term" value="P:defense response to bacterium"/>
    <property type="evidence" value="ECO:0007669"/>
    <property type="project" value="UniProtKB-KW"/>
</dbReference>
<dbReference type="GO" id="GO:0045087">
    <property type="term" value="P:innate immune response"/>
    <property type="evidence" value="ECO:0007669"/>
    <property type="project" value="InterPro"/>
</dbReference>
<dbReference type="Gene3D" id="3.10.360.10">
    <property type="entry name" value="Antimicrobial Peptide, Beta-defensin 2, Chain A"/>
    <property type="match status" value="1"/>
</dbReference>
<dbReference type="InterPro" id="IPR050544">
    <property type="entry name" value="Beta-defensin"/>
</dbReference>
<dbReference type="InterPro" id="IPR025933">
    <property type="entry name" value="Beta_defensin_dom"/>
</dbReference>
<dbReference type="PANTHER" id="PTHR15001:SF8">
    <property type="entry name" value="BETA-DEFENSIN 121"/>
    <property type="match status" value="1"/>
</dbReference>
<dbReference type="PANTHER" id="PTHR15001">
    <property type="entry name" value="BETA-DEFENSIN 123-RELATED"/>
    <property type="match status" value="1"/>
</dbReference>
<dbReference type="Pfam" id="PF13841">
    <property type="entry name" value="Defensin_beta_2"/>
    <property type="match status" value="1"/>
</dbReference>
<feature type="signal peptide" evidence="2">
    <location>
        <begin position="1"/>
        <end position="15"/>
    </location>
</feature>
<feature type="chain" id="PRO_0000006992" description="Beta-defensin 121">
    <location>
        <begin position="16"/>
        <end position="76"/>
    </location>
</feature>
<feature type="disulfide bond" evidence="1">
    <location>
        <begin position="23"/>
        <end position="50"/>
    </location>
</feature>
<feature type="disulfide bond" evidence="1">
    <location>
        <begin position="30"/>
        <end position="44"/>
    </location>
</feature>
<feature type="disulfide bond" evidence="1">
    <location>
        <begin position="34"/>
        <end position="51"/>
    </location>
</feature>
<name>DB121_MACMU</name>
<evidence type="ECO:0000250" key="1"/>
<evidence type="ECO:0000255" key="2"/>
<evidence type="ECO:0000269" key="3">
    <source>
    </source>
</evidence>
<evidence type="ECO:0000305" key="4"/>
<comment type="function">
    <text evidence="4">Has antibacterial activity.</text>
</comment>
<comment type="subcellular location">
    <subcellularLocation>
        <location evidence="4">Secreted</location>
    </subcellularLocation>
</comment>
<comment type="tissue specificity">
    <text evidence="3">Abundant expression in the male reproductive tract only.</text>
</comment>
<comment type="similarity">
    <text evidence="4">Belongs to the beta-defensin family.</text>
</comment>
<protein>
    <recommendedName>
        <fullName>Beta-defensin 121</fullName>
    </recommendedName>
    <alternativeName>
        <fullName>Defensin, beta 121</fullName>
    </alternativeName>
</protein>
<keyword id="KW-0044">Antibiotic</keyword>
<keyword id="KW-0929">Antimicrobial</keyword>
<keyword id="KW-0211">Defensin</keyword>
<keyword id="KW-1015">Disulfide bond</keyword>
<keyword id="KW-1185">Reference proteome</keyword>
<keyword id="KW-0964">Secreted</keyword>
<keyword id="KW-0732">Signal</keyword>
<reference key="1">
    <citation type="journal article" date="2005" name="Genes Immun.">
        <title>Identification, characterization, and evolution of a primate beta-defensin gene cluster.</title>
        <authorList>
            <person name="Radhakrishnan Y."/>
            <person name="Hamil K.G."/>
            <person name="Yenugu S."/>
            <person name="Young S.L."/>
            <person name="French F.S."/>
            <person name="Hall S.H."/>
        </authorList>
    </citation>
    <scope>NUCLEOTIDE SEQUENCE [MRNA]</scope>
    <scope>TISSUE SPECIFICITY</scope>
    <source>
        <tissue>Testis</tissue>
    </source>
</reference>
<gene>
    <name type="primary">DEFB121</name>
</gene>